<proteinExistence type="predicted"/>
<accession>P59969</accession>
<accession>A0A1R3XYU0</accession>
<accession>X2BGB7</accession>
<keyword id="KW-0238">DNA-binding</keyword>
<keyword id="KW-1185">Reference proteome</keyword>
<keyword id="KW-0804">Transcription</keyword>
<keyword id="KW-0805">Transcription regulation</keyword>
<gene>
    <name type="ordered locus">BQ2027_MB0914C</name>
</gene>
<feature type="chain" id="PRO_0000184200" description="Putative HTH-type transcriptional regulator Mb0914c">
    <location>
        <begin position="1"/>
        <end position="882"/>
    </location>
</feature>
<feature type="domain" description="HTH luxR-type" evidence="1">
    <location>
        <begin position="814"/>
        <end position="879"/>
    </location>
</feature>
<feature type="DNA-binding region" description="H-T-H motif" evidence="1">
    <location>
        <begin position="838"/>
        <end position="857"/>
    </location>
</feature>
<protein>
    <recommendedName>
        <fullName>Putative HTH-type transcriptional regulator Mb0914c</fullName>
    </recommendedName>
</protein>
<evidence type="ECO:0000255" key="1">
    <source>
        <dbReference type="PROSITE-ProRule" id="PRU00411"/>
    </source>
</evidence>
<reference key="1">
    <citation type="journal article" date="2003" name="Proc. Natl. Acad. Sci. U.S.A.">
        <title>The complete genome sequence of Mycobacterium bovis.</title>
        <authorList>
            <person name="Garnier T."/>
            <person name="Eiglmeier K."/>
            <person name="Camus J.-C."/>
            <person name="Medina N."/>
            <person name="Mansoor H."/>
            <person name="Pryor M."/>
            <person name="Duthoy S."/>
            <person name="Grondin S."/>
            <person name="Lacroix C."/>
            <person name="Monsempe C."/>
            <person name="Simon S."/>
            <person name="Harris B."/>
            <person name="Atkin R."/>
            <person name="Doggett J."/>
            <person name="Mayes R."/>
            <person name="Keating L."/>
            <person name="Wheeler P.R."/>
            <person name="Parkhill J."/>
            <person name="Barrell B.G."/>
            <person name="Cole S.T."/>
            <person name="Gordon S.V."/>
            <person name="Hewinson R.G."/>
        </authorList>
    </citation>
    <scope>NUCLEOTIDE SEQUENCE [LARGE SCALE GENOMIC DNA]</scope>
    <source>
        <strain>ATCC BAA-935 / AF2122/97</strain>
    </source>
</reference>
<reference key="2">
    <citation type="journal article" date="2017" name="Genome Announc.">
        <title>Updated reference genome sequence and annotation of Mycobacterium bovis AF2122/97.</title>
        <authorList>
            <person name="Malone K.M."/>
            <person name="Farrell D."/>
            <person name="Stuber T.P."/>
            <person name="Schubert O.T."/>
            <person name="Aebersold R."/>
            <person name="Robbe-Austerman S."/>
            <person name="Gordon S.V."/>
        </authorList>
    </citation>
    <scope>NUCLEOTIDE SEQUENCE [LARGE SCALE GENOMIC DNA]</scope>
    <scope>GENOME REANNOTATION</scope>
    <source>
        <strain>ATCC BAA-935 / AF2122/97</strain>
    </source>
</reference>
<organism>
    <name type="scientific">Mycobacterium bovis (strain ATCC BAA-935 / AF2122/97)</name>
    <dbReference type="NCBI Taxonomy" id="233413"/>
    <lineage>
        <taxon>Bacteria</taxon>
        <taxon>Bacillati</taxon>
        <taxon>Actinomycetota</taxon>
        <taxon>Actinomycetes</taxon>
        <taxon>Mycobacteriales</taxon>
        <taxon>Mycobacteriaceae</taxon>
        <taxon>Mycobacterium</taxon>
        <taxon>Mycobacterium tuberculosis complex</taxon>
    </lineage>
</organism>
<name>Y914_MYCBO</name>
<sequence length="882" mass="94470">MRALLAQNRLVTLCGTGGVGKTRLAIQIASASELRDGLCFVDLAPITESGIVAATAARAVGLPDQPGRSTMDSLRRFIGNRRMLMVLDNCEHLLDACAALVVELLGACPELTILATSREPIGMAGEITWRVPSMSITDEAVELFADRASRVQPGFTIANHNAAAVGEICRRLDGIPLAIEFAAARVRSMSPLEIADGLDDCFRLLAGGVRGAVQRQQTLRASIDWSHALLTETEQILFRRLAPFVGGFDLAAVRAVAAGSDLDPFSVLDQLTLLVDKSLVVADDCQGRTRYRLLETVRRYALEKLGDSGEADVHARHRDYYTALAASLNTPADNDHQRLVARAETEIDNLRAAFAWSRENGHITEALQLASSLQPIWFGRAHLREGLSWFNSILEDQRFHRLAVSTAVRARALADKAMLSTWLATSPVGATDIIAPAQQALAMAREVGDPAALVRALTACGCSSGYNAEAAAPYFAEATDLARAIDDKWTLCQILYWRGVGTCISGDPNALRAAAEECRDLADTIGDRFVSRHCSLWLSLAQMWAGNLTEALELSREITAEAEASNDVPTKVLGLYTQAQVLAYCGASAAHAIAGACIAAATELGGVYQGIGYAAMTYAALAAGDVTAALEASDAARPILRAQPDQVTMHQVLMAQLALAGGDAIAARQFANDAVDATNGWHRMVALTIRARVATARGEPELARDDAHAALACGAELHIYQGMPDAMELLAGLAGEVGSHSEGVRLLGAAAALRQQTRQVRFKIWDAGYQASVTALREAMGDEDFDRAWAEGAALSTDEAIAYAQRGRGERKRPARGWGSLTPTERDVVRLVSEGLSNKDIAKRLFVSPRTVQTHLTHVYAKLGLASRVQLVDEAARRGSPS</sequence>
<dbReference type="EMBL" id="LT708304">
    <property type="protein sequence ID" value="SIT99512.1"/>
    <property type="molecule type" value="Genomic_DNA"/>
</dbReference>
<dbReference type="RefSeq" id="NP_854571.1">
    <property type="nucleotide sequence ID" value="NC_002945.3"/>
</dbReference>
<dbReference type="SMR" id="P59969"/>
<dbReference type="KEGG" id="mbo:BQ2027_MB0914C"/>
<dbReference type="PATRIC" id="fig|233413.5.peg.995"/>
<dbReference type="Proteomes" id="UP000001419">
    <property type="component" value="Chromosome"/>
</dbReference>
<dbReference type="GO" id="GO:0003677">
    <property type="term" value="F:DNA binding"/>
    <property type="evidence" value="ECO:0007669"/>
    <property type="project" value="UniProtKB-KW"/>
</dbReference>
<dbReference type="GO" id="GO:0006355">
    <property type="term" value="P:regulation of DNA-templated transcription"/>
    <property type="evidence" value="ECO:0007669"/>
    <property type="project" value="InterPro"/>
</dbReference>
<dbReference type="CDD" id="cd06170">
    <property type="entry name" value="LuxR_C_like"/>
    <property type="match status" value="1"/>
</dbReference>
<dbReference type="FunFam" id="1.10.10.10:FF:000553">
    <property type="entry name" value="Transcriptional regulator, LuxR family"/>
    <property type="match status" value="1"/>
</dbReference>
<dbReference type="Gene3D" id="3.40.50.300">
    <property type="entry name" value="P-loop containing nucleotide triphosphate hydrolases"/>
    <property type="match status" value="1"/>
</dbReference>
<dbReference type="Gene3D" id="1.25.40.10">
    <property type="entry name" value="Tetratricopeptide repeat domain"/>
    <property type="match status" value="1"/>
</dbReference>
<dbReference type="Gene3D" id="1.10.10.10">
    <property type="entry name" value="Winged helix-like DNA-binding domain superfamily/Winged helix DNA-binding domain"/>
    <property type="match status" value="1"/>
</dbReference>
<dbReference type="InterPro" id="IPR027417">
    <property type="entry name" value="P-loop_NTPase"/>
</dbReference>
<dbReference type="InterPro" id="IPR016032">
    <property type="entry name" value="Sig_transdc_resp-reg_C-effctor"/>
</dbReference>
<dbReference type="InterPro" id="IPR011990">
    <property type="entry name" value="TPR-like_helical_dom_sf"/>
</dbReference>
<dbReference type="InterPro" id="IPR000792">
    <property type="entry name" value="Tscrpt_reg_LuxR_C"/>
</dbReference>
<dbReference type="InterPro" id="IPR036388">
    <property type="entry name" value="WH-like_DNA-bd_sf"/>
</dbReference>
<dbReference type="PANTHER" id="PTHR47691:SF3">
    <property type="entry name" value="HTH-TYPE TRANSCRIPTIONAL REGULATOR RV0890C-RELATED"/>
    <property type="match status" value="1"/>
</dbReference>
<dbReference type="PANTHER" id="PTHR47691">
    <property type="entry name" value="REGULATOR-RELATED"/>
    <property type="match status" value="1"/>
</dbReference>
<dbReference type="Pfam" id="PF00196">
    <property type="entry name" value="GerE"/>
    <property type="match status" value="1"/>
</dbReference>
<dbReference type="PRINTS" id="PR00364">
    <property type="entry name" value="DISEASERSIST"/>
</dbReference>
<dbReference type="PRINTS" id="PR00038">
    <property type="entry name" value="HTHLUXR"/>
</dbReference>
<dbReference type="SMART" id="SM00421">
    <property type="entry name" value="HTH_LUXR"/>
    <property type="match status" value="1"/>
</dbReference>
<dbReference type="SUPFAM" id="SSF46894">
    <property type="entry name" value="C-terminal effector domain of the bipartite response regulators"/>
    <property type="match status" value="1"/>
</dbReference>
<dbReference type="SUPFAM" id="SSF52540">
    <property type="entry name" value="P-loop containing nucleoside triphosphate hydrolases"/>
    <property type="match status" value="1"/>
</dbReference>
<dbReference type="PROSITE" id="PS00622">
    <property type="entry name" value="HTH_LUXR_1"/>
    <property type="match status" value="1"/>
</dbReference>
<dbReference type="PROSITE" id="PS50043">
    <property type="entry name" value="HTH_LUXR_2"/>
    <property type="match status" value="1"/>
</dbReference>